<reference key="1">
    <citation type="journal article" date="2008" name="J. Bacteriol.">
        <title>The pangenome structure of Escherichia coli: comparative genomic analysis of E. coli commensal and pathogenic isolates.</title>
        <authorList>
            <person name="Rasko D.A."/>
            <person name="Rosovitz M.J."/>
            <person name="Myers G.S.A."/>
            <person name="Mongodin E.F."/>
            <person name="Fricke W.F."/>
            <person name="Gajer P."/>
            <person name="Crabtree J."/>
            <person name="Sebaihia M."/>
            <person name="Thomson N.R."/>
            <person name="Chaudhuri R."/>
            <person name="Henderson I.R."/>
            <person name="Sperandio V."/>
            <person name="Ravel J."/>
        </authorList>
    </citation>
    <scope>NUCLEOTIDE SEQUENCE [LARGE SCALE GENOMIC DNA]</scope>
    <source>
        <strain>E24377A / ETEC</strain>
    </source>
</reference>
<comment type="function">
    <text evidence="1">One of the primary rRNA binding proteins, it binds directly to 16S rRNA where it helps nucleate assembly of the platform of the 30S subunit by binding and bridging several RNA helices of the 16S rRNA.</text>
</comment>
<comment type="function">
    <text evidence="1">Forms an intersubunit bridge (bridge B4) with the 23S rRNA of the 50S subunit in the ribosome.</text>
</comment>
<comment type="subunit">
    <text evidence="1">Part of the 30S ribosomal subunit. Forms a bridge to the 50S subunit in the 70S ribosome, contacting the 23S rRNA.</text>
</comment>
<comment type="similarity">
    <text evidence="1">Belongs to the universal ribosomal protein uS15 family.</text>
</comment>
<sequence length="89" mass="10269">MSLSTEATAKIVSEFGRDANDTGSTEVQVALLTAQINHLQGHFAEHKKDHHSRRGLLRMVSQRRKLLDYLKRKDVARYTQLIERLGLRR</sequence>
<evidence type="ECO:0000255" key="1">
    <source>
        <dbReference type="HAMAP-Rule" id="MF_01343"/>
    </source>
</evidence>
<evidence type="ECO:0000305" key="2"/>
<protein>
    <recommendedName>
        <fullName evidence="1">Small ribosomal subunit protein uS15</fullName>
    </recommendedName>
    <alternativeName>
        <fullName evidence="2">30S ribosomal protein S15</fullName>
    </alternativeName>
</protein>
<proteinExistence type="inferred from homology"/>
<keyword id="KW-1185">Reference proteome</keyword>
<keyword id="KW-0687">Ribonucleoprotein</keyword>
<keyword id="KW-0689">Ribosomal protein</keyword>
<keyword id="KW-0694">RNA-binding</keyword>
<keyword id="KW-0699">rRNA-binding</keyword>
<name>RS15_ECO24</name>
<organism>
    <name type="scientific">Escherichia coli O139:H28 (strain E24377A / ETEC)</name>
    <dbReference type="NCBI Taxonomy" id="331111"/>
    <lineage>
        <taxon>Bacteria</taxon>
        <taxon>Pseudomonadati</taxon>
        <taxon>Pseudomonadota</taxon>
        <taxon>Gammaproteobacteria</taxon>
        <taxon>Enterobacterales</taxon>
        <taxon>Enterobacteriaceae</taxon>
        <taxon>Escherichia</taxon>
    </lineage>
</organism>
<dbReference type="EMBL" id="CP000800">
    <property type="protein sequence ID" value="ABV19123.1"/>
    <property type="molecule type" value="Genomic_DNA"/>
</dbReference>
<dbReference type="RefSeq" id="WP_000059466.1">
    <property type="nucleotide sequence ID" value="NC_009801.1"/>
</dbReference>
<dbReference type="SMR" id="A7ZS62"/>
<dbReference type="GeneID" id="93778818"/>
<dbReference type="KEGG" id="ecw:EcE24377A_3649"/>
<dbReference type="HOGENOM" id="CLU_148518_0_0_6"/>
<dbReference type="Proteomes" id="UP000001122">
    <property type="component" value="Chromosome"/>
</dbReference>
<dbReference type="GO" id="GO:0022627">
    <property type="term" value="C:cytosolic small ribosomal subunit"/>
    <property type="evidence" value="ECO:0007669"/>
    <property type="project" value="TreeGrafter"/>
</dbReference>
<dbReference type="GO" id="GO:0019843">
    <property type="term" value="F:rRNA binding"/>
    <property type="evidence" value="ECO:0007669"/>
    <property type="project" value="UniProtKB-UniRule"/>
</dbReference>
<dbReference type="GO" id="GO:0003735">
    <property type="term" value="F:structural constituent of ribosome"/>
    <property type="evidence" value="ECO:0007669"/>
    <property type="project" value="InterPro"/>
</dbReference>
<dbReference type="GO" id="GO:0006412">
    <property type="term" value="P:translation"/>
    <property type="evidence" value="ECO:0007669"/>
    <property type="project" value="UniProtKB-UniRule"/>
</dbReference>
<dbReference type="CDD" id="cd00353">
    <property type="entry name" value="Ribosomal_S15p_S13e"/>
    <property type="match status" value="1"/>
</dbReference>
<dbReference type="FunFam" id="1.10.287.10:FF:000002">
    <property type="entry name" value="30S ribosomal protein S15"/>
    <property type="match status" value="1"/>
</dbReference>
<dbReference type="Gene3D" id="6.10.250.3130">
    <property type="match status" value="1"/>
</dbReference>
<dbReference type="Gene3D" id="1.10.287.10">
    <property type="entry name" value="S15/NS1, RNA-binding"/>
    <property type="match status" value="1"/>
</dbReference>
<dbReference type="HAMAP" id="MF_01343_B">
    <property type="entry name" value="Ribosomal_uS15_B"/>
    <property type="match status" value="1"/>
</dbReference>
<dbReference type="InterPro" id="IPR000589">
    <property type="entry name" value="Ribosomal_uS15"/>
</dbReference>
<dbReference type="InterPro" id="IPR005290">
    <property type="entry name" value="Ribosomal_uS15_bac-type"/>
</dbReference>
<dbReference type="InterPro" id="IPR009068">
    <property type="entry name" value="uS15_NS1_RNA-bd_sf"/>
</dbReference>
<dbReference type="NCBIfam" id="TIGR00952">
    <property type="entry name" value="S15_bact"/>
    <property type="match status" value="1"/>
</dbReference>
<dbReference type="PANTHER" id="PTHR23321">
    <property type="entry name" value="RIBOSOMAL PROTEIN S15, BACTERIAL AND ORGANELLAR"/>
    <property type="match status" value="1"/>
</dbReference>
<dbReference type="PANTHER" id="PTHR23321:SF26">
    <property type="entry name" value="SMALL RIBOSOMAL SUBUNIT PROTEIN US15M"/>
    <property type="match status" value="1"/>
</dbReference>
<dbReference type="Pfam" id="PF00312">
    <property type="entry name" value="Ribosomal_S15"/>
    <property type="match status" value="1"/>
</dbReference>
<dbReference type="SMART" id="SM01387">
    <property type="entry name" value="Ribosomal_S15"/>
    <property type="match status" value="1"/>
</dbReference>
<dbReference type="SUPFAM" id="SSF47060">
    <property type="entry name" value="S15/NS1 RNA-binding domain"/>
    <property type="match status" value="1"/>
</dbReference>
<dbReference type="PROSITE" id="PS00362">
    <property type="entry name" value="RIBOSOMAL_S15"/>
    <property type="match status" value="1"/>
</dbReference>
<accession>A7ZS62</accession>
<gene>
    <name evidence="1" type="primary">rpsO</name>
    <name type="ordered locus">EcE24377A_3649</name>
</gene>
<feature type="chain" id="PRO_1000067687" description="Small ribosomal subunit protein uS15">
    <location>
        <begin position="1"/>
        <end position="89"/>
    </location>
</feature>